<sequence>MQNERRIAQRFLEDKQLPYSSNELITMALTHPSYAQEKNTVANNQRLEFLGDAVLNLVVAEYLYNHYGRKAEGELTKIRAKVVCEDALAIFARNINLGQYLLLGRGEEMSGGRKRKSILADAVEAVIGAIYLDQGLETVQRFIIRQLEELISETASGDYYDYKSKLQELVQARDKENVSYAIIEESGPAHAKVFVAGVYYREQLLATGEGKSKKEAEQKAAQKVLQDNLVPGT</sequence>
<reference key="1">
    <citation type="journal article" date="2010" name="Environ. Microbiol.">
        <title>The genome of Syntrophomonas wolfei: new insights into syntrophic metabolism and biohydrogen production.</title>
        <authorList>
            <person name="Sieber J.R."/>
            <person name="Sims D.R."/>
            <person name="Han C."/>
            <person name="Kim E."/>
            <person name="Lykidis A."/>
            <person name="Lapidus A.L."/>
            <person name="McDonnald E."/>
            <person name="Rohlin L."/>
            <person name="Culley D.E."/>
            <person name="Gunsalus R."/>
            <person name="McInerney M.J."/>
        </authorList>
    </citation>
    <scope>NUCLEOTIDE SEQUENCE [LARGE SCALE GENOMIC DNA]</scope>
    <source>
        <strain>DSM 2245B / Goettingen</strain>
    </source>
</reference>
<evidence type="ECO:0000255" key="1">
    <source>
        <dbReference type="HAMAP-Rule" id="MF_00104"/>
    </source>
</evidence>
<organism>
    <name type="scientific">Syntrophomonas wolfei subsp. wolfei (strain DSM 2245B / Goettingen)</name>
    <dbReference type="NCBI Taxonomy" id="335541"/>
    <lineage>
        <taxon>Bacteria</taxon>
        <taxon>Bacillati</taxon>
        <taxon>Bacillota</taxon>
        <taxon>Clostridia</taxon>
        <taxon>Eubacteriales</taxon>
        <taxon>Syntrophomonadaceae</taxon>
        <taxon>Syntrophomonas</taxon>
    </lineage>
</organism>
<gene>
    <name evidence="1" type="primary">rnc</name>
    <name type="ordered locus">Swol_0773</name>
</gene>
<comment type="function">
    <text evidence="1">Digests double-stranded RNA. Involved in the processing of primary rRNA transcript to yield the immediate precursors to the large and small rRNAs (23S and 16S). Processes some mRNAs, and tRNAs when they are encoded in the rRNA operon. Processes pre-crRNA and tracrRNA of type II CRISPR loci if present in the organism.</text>
</comment>
<comment type="catalytic activity">
    <reaction evidence="1">
        <text>Endonucleolytic cleavage to 5'-phosphomonoester.</text>
        <dbReference type="EC" id="3.1.26.3"/>
    </reaction>
</comment>
<comment type="cofactor">
    <cofactor evidence="1">
        <name>Mg(2+)</name>
        <dbReference type="ChEBI" id="CHEBI:18420"/>
    </cofactor>
</comment>
<comment type="subunit">
    <text evidence="1">Homodimer.</text>
</comment>
<comment type="subcellular location">
    <subcellularLocation>
        <location evidence="1">Cytoplasm</location>
    </subcellularLocation>
</comment>
<comment type="similarity">
    <text evidence="1">Belongs to the ribonuclease III family.</text>
</comment>
<proteinExistence type="inferred from homology"/>
<name>RNC_SYNWW</name>
<accession>Q0AYW0</accession>
<protein>
    <recommendedName>
        <fullName evidence="1">Ribonuclease 3</fullName>
        <ecNumber evidence="1">3.1.26.3</ecNumber>
    </recommendedName>
    <alternativeName>
        <fullName evidence="1">Ribonuclease III</fullName>
        <shortName evidence="1">RNase III</shortName>
    </alternativeName>
</protein>
<keyword id="KW-0963">Cytoplasm</keyword>
<keyword id="KW-0255">Endonuclease</keyword>
<keyword id="KW-0378">Hydrolase</keyword>
<keyword id="KW-0460">Magnesium</keyword>
<keyword id="KW-0479">Metal-binding</keyword>
<keyword id="KW-0507">mRNA processing</keyword>
<keyword id="KW-0540">Nuclease</keyword>
<keyword id="KW-1185">Reference proteome</keyword>
<keyword id="KW-0694">RNA-binding</keyword>
<keyword id="KW-0698">rRNA processing</keyword>
<keyword id="KW-0699">rRNA-binding</keyword>
<keyword id="KW-0819">tRNA processing</keyword>
<dbReference type="EC" id="3.1.26.3" evidence="1"/>
<dbReference type="EMBL" id="CP000448">
    <property type="protein sequence ID" value="ABI68094.1"/>
    <property type="molecule type" value="Genomic_DNA"/>
</dbReference>
<dbReference type="RefSeq" id="WP_011640199.1">
    <property type="nucleotide sequence ID" value="NC_008346.1"/>
</dbReference>
<dbReference type="SMR" id="Q0AYW0"/>
<dbReference type="STRING" id="335541.Swol_0773"/>
<dbReference type="KEGG" id="swo:Swol_0773"/>
<dbReference type="eggNOG" id="COG0571">
    <property type="taxonomic scope" value="Bacteria"/>
</dbReference>
<dbReference type="HOGENOM" id="CLU_000907_1_3_9"/>
<dbReference type="OrthoDB" id="9805026at2"/>
<dbReference type="Proteomes" id="UP000001968">
    <property type="component" value="Chromosome"/>
</dbReference>
<dbReference type="GO" id="GO:0005737">
    <property type="term" value="C:cytoplasm"/>
    <property type="evidence" value="ECO:0007669"/>
    <property type="project" value="UniProtKB-SubCell"/>
</dbReference>
<dbReference type="GO" id="GO:0003725">
    <property type="term" value="F:double-stranded RNA binding"/>
    <property type="evidence" value="ECO:0007669"/>
    <property type="project" value="TreeGrafter"/>
</dbReference>
<dbReference type="GO" id="GO:0046872">
    <property type="term" value="F:metal ion binding"/>
    <property type="evidence" value="ECO:0007669"/>
    <property type="project" value="UniProtKB-KW"/>
</dbReference>
<dbReference type="GO" id="GO:0004525">
    <property type="term" value="F:ribonuclease III activity"/>
    <property type="evidence" value="ECO:0007669"/>
    <property type="project" value="UniProtKB-UniRule"/>
</dbReference>
<dbReference type="GO" id="GO:0019843">
    <property type="term" value="F:rRNA binding"/>
    <property type="evidence" value="ECO:0007669"/>
    <property type="project" value="UniProtKB-KW"/>
</dbReference>
<dbReference type="GO" id="GO:0006397">
    <property type="term" value="P:mRNA processing"/>
    <property type="evidence" value="ECO:0007669"/>
    <property type="project" value="UniProtKB-UniRule"/>
</dbReference>
<dbReference type="GO" id="GO:0010468">
    <property type="term" value="P:regulation of gene expression"/>
    <property type="evidence" value="ECO:0007669"/>
    <property type="project" value="TreeGrafter"/>
</dbReference>
<dbReference type="GO" id="GO:0006364">
    <property type="term" value="P:rRNA processing"/>
    <property type="evidence" value="ECO:0007669"/>
    <property type="project" value="UniProtKB-UniRule"/>
</dbReference>
<dbReference type="GO" id="GO:0008033">
    <property type="term" value="P:tRNA processing"/>
    <property type="evidence" value="ECO:0007669"/>
    <property type="project" value="UniProtKB-KW"/>
</dbReference>
<dbReference type="CDD" id="cd10845">
    <property type="entry name" value="DSRM_RNAse_III_family"/>
    <property type="match status" value="1"/>
</dbReference>
<dbReference type="CDD" id="cd00593">
    <property type="entry name" value="RIBOc"/>
    <property type="match status" value="1"/>
</dbReference>
<dbReference type="FunFam" id="1.10.1520.10:FF:000001">
    <property type="entry name" value="Ribonuclease 3"/>
    <property type="match status" value="1"/>
</dbReference>
<dbReference type="FunFam" id="3.30.160.20:FF:000003">
    <property type="entry name" value="Ribonuclease 3"/>
    <property type="match status" value="1"/>
</dbReference>
<dbReference type="Gene3D" id="3.30.160.20">
    <property type="match status" value="1"/>
</dbReference>
<dbReference type="Gene3D" id="1.10.1520.10">
    <property type="entry name" value="Ribonuclease III domain"/>
    <property type="match status" value="1"/>
</dbReference>
<dbReference type="HAMAP" id="MF_00104">
    <property type="entry name" value="RNase_III"/>
    <property type="match status" value="1"/>
</dbReference>
<dbReference type="InterPro" id="IPR014720">
    <property type="entry name" value="dsRBD_dom"/>
</dbReference>
<dbReference type="InterPro" id="IPR011907">
    <property type="entry name" value="RNase_III"/>
</dbReference>
<dbReference type="InterPro" id="IPR000999">
    <property type="entry name" value="RNase_III_dom"/>
</dbReference>
<dbReference type="InterPro" id="IPR036389">
    <property type="entry name" value="RNase_III_sf"/>
</dbReference>
<dbReference type="NCBIfam" id="TIGR02191">
    <property type="entry name" value="RNaseIII"/>
    <property type="match status" value="1"/>
</dbReference>
<dbReference type="PANTHER" id="PTHR11207:SF0">
    <property type="entry name" value="RIBONUCLEASE 3"/>
    <property type="match status" value="1"/>
</dbReference>
<dbReference type="PANTHER" id="PTHR11207">
    <property type="entry name" value="RIBONUCLEASE III"/>
    <property type="match status" value="1"/>
</dbReference>
<dbReference type="Pfam" id="PF00035">
    <property type="entry name" value="dsrm"/>
    <property type="match status" value="1"/>
</dbReference>
<dbReference type="Pfam" id="PF14622">
    <property type="entry name" value="Ribonucleas_3_3"/>
    <property type="match status" value="1"/>
</dbReference>
<dbReference type="SMART" id="SM00358">
    <property type="entry name" value="DSRM"/>
    <property type="match status" value="1"/>
</dbReference>
<dbReference type="SMART" id="SM00535">
    <property type="entry name" value="RIBOc"/>
    <property type="match status" value="1"/>
</dbReference>
<dbReference type="SUPFAM" id="SSF54768">
    <property type="entry name" value="dsRNA-binding domain-like"/>
    <property type="match status" value="1"/>
</dbReference>
<dbReference type="SUPFAM" id="SSF69065">
    <property type="entry name" value="RNase III domain-like"/>
    <property type="match status" value="1"/>
</dbReference>
<dbReference type="PROSITE" id="PS50137">
    <property type="entry name" value="DS_RBD"/>
    <property type="match status" value="1"/>
</dbReference>
<dbReference type="PROSITE" id="PS00517">
    <property type="entry name" value="RNASE_3_1"/>
    <property type="match status" value="1"/>
</dbReference>
<dbReference type="PROSITE" id="PS50142">
    <property type="entry name" value="RNASE_3_2"/>
    <property type="match status" value="1"/>
</dbReference>
<feature type="chain" id="PRO_1000075844" description="Ribonuclease 3">
    <location>
        <begin position="1"/>
        <end position="233"/>
    </location>
</feature>
<feature type="domain" description="RNase III" evidence="1">
    <location>
        <begin position="8"/>
        <end position="135"/>
    </location>
</feature>
<feature type="domain" description="DRBM" evidence="1">
    <location>
        <begin position="161"/>
        <end position="230"/>
    </location>
</feature>
<feature type="active site" evidence="1">
    <location>
        <position position="52"/>
    </location>
</feature>
<feature type="active site" evidence="1">
    <location>
        <position position="124"/>
    </location>
</feature>
<feature type="binding site" evidence="1">
    <location>
        <position position="48"/>
    </location>
    <ligand>
        <name>Mg(2+)</name>
        <dbReference type="ChEBI" id="CHEBI:18420"/>
    </ligand>
</feature>
<feature type="binding site" evidence="1">
    <location>
        <position position="121"/>
    </location>
    <ligand>
        <name>Mg(2+)</name>
        <dbReference type="ChEBI" id="CHEBI:18420"/>
    </ligand>
</feature>
<feature type="binding site" evidence="1">
    <location>
        <position position="124"/>
    </location>
    <ligand>
        <name>Mg(2+)</name>
        <dbReference type="ChEBI" id="CHEBI:18420"/>
    </ligand>
</feature>